<name>OPGG_SHISS</name>
<comment type="function">
    <text evidence="1">Involved in the biosynthesis of osmoregulated periplasmic glucans (OPGs).</text>
</comment>
<comment type="pathway">
    <text evidence="1">Glycan metabolism; osmoregulated periplasmic glucan (OPG) biosynthesis.</text>
</comment>
<comment type="subcellular location">
    <subcellularLocation>
        <location evidence="1">Periplasm</location>
    </subcellularLocation>
</comment>
<comment type="similarity">
    <text evidence="1">Belongs to the OpgD/OpgG family.</text>
</comment>
<accession>Q3Z375</accession>
<protein>
    <recommendedName>
        <fullName evidence="1">Glucans biosynthesis protein G</fullName>
    </recommendedName>
</protein>
<gene>
    <name evidence="1" type="primary">mdoG</name>
    <name evidence="1" type="synonym">opgG</name>
    <name type="ordered locus">SSON_1061</name>
</gene>
<organism>
    <name type="scientific">Shigella sonnei (strain Ss046)</name>
    <dbReference type="NCBI Taxonomy" id="300269"/>
    <lineage>
        <taxon>Bacteria</taxon>
        <taxon>Pseudomonadati</taxon>
        <taxon>Pseudomonadota</taxon>
        <taxon>Gammaproteobacteria</taxon>
        <taxon>Enterobacterales</taxon>
        <taxon>Enterobacteriaceae</taxon>
        <taxon>Shigella</taxon>
    </lineage>
</organism>
<feature type="signal peptide" evidence="1">
    <location>
        <begin position="1"/>
        <end position="22"/>
    </location>
</feature>
<feature type="chain" id="PRO_1000064569" description="Glucans biosynthesis protein G">
    <location>
        <begin position="23"/>
        <end position="511"/>
    </location>
</feature>
<evidence type="ECO:0000255" key="1">
    <source>
        <dbReference type="HAMAP-Rule" id="MF_01069"/>
    </source>
</evidence>
<dbReference type="EMBL" id="CP000038">
    <property type="protein sequence ID" value="AAZ87787.1"/>
    <property type="molecule type" value="Genomic_DNA"/>
</dbReference>
<dbReference type="RefSeq" id="WP_001300662.1">
    <property type="nucleotide sequence ID" value="NC_007384.1"/>
</dbReference>
<dbReference type="SMR" id="Q3Z375"/>
<dbReference type="GeneID" id="93776366"/>
<dbReference type="KEGG" id="ssn:SSON_1061"/>
<dbReference type="HOGENOM" id="CLU_023403_2_0_6"/>
<dbReference type="UniPathway" id="UPA00637"/>
<dbReference type="Proteomes" id="UP000002529">
    <property type="component" value="Chromosome"/>
</dbReference>
<dbReference type="GO" id="GO:0030288">
    <property type="term" value="C:outer membrane-bounded periplasmic space"/>
    <property type="evidence" value="ECO:0007669"/>
    <property type="project" value="TreeGrafter"/>
</dbReference>
<dbReference type="GO" id="GO:0030246">
    <property type="term" value="F:carbohydrate binding"/>
    <property type="evidence" value="ECO:0007669"/>
    <property type="project" value="InterPro"/>
</dbReference>
<dbReference type="GO" id="GO:0003824">
    <property type="term" value="F:catalytic activity"/>
    <property type="evidence" value="ECO:0007669"/>
    <property type="project" value="InterPro"/>
</dbReference>
<dbReference type="GO" id="GO:0051274">
    <property type="term" value="P:beta-glucan biosynthetic process"/>
    <property type="evidence" value="ECO:0007669"/>
    <property type="project" value="TreeGrafter"/>
</dbReference>
<dbReference type="FunFam" id="2.60.40.10:FF:000294">
    <property type="entry name" value="Glucans biosynthesis protein G"/>
    <property type="match status" value="1"/>
</dbReference>
<dbReference type="FunFam" id="2.70.98.10:FF:000001">
    <property type="entry name" value="Glucans biosynthesis protein G"/>
    <property type="match status" value="1"/>
</dbReference>
<dbReference type="Gene3D" id="2.70.98.10">
    <property type="match status" value="1"/>
</dbReference>
<dbReference type="Gene3D" id="2.60.40.10">
    <property type="entry name" value="Immunoglobulins"/>
    <property type="match status" value="1"/>
</dbReference>
<dbReference type="HAMAP" id="MF_01069">
    <property type="entry name" value="MdoG_OpgG"/>
    <property type="match status" value="1"/>
</dbReference>
<dbReference type="InterPro" id="IPR011013">
    <property type="entry name" value="Gal_mutarotase_sf_dom"/>
</dbReference>
<dbReference type="InterPro" id="IPR014718">
    <property type="entry name" value="GH-type_carb-bd"/>
</dbReference>
<dbReference type="InterPro" id="IPR014438">
    <property type="entry name" value="Glucan_biosyn_MdoG/MdoD"/>
</dbReference>
<dbReference type="InterPro" id="IPR007444">
    <property type="entry name" value="Glucan_biosyn_MdoG_C"/>
</dbReference>
<dbReference type="InterPro" id="IPR013783">
    <property type="entry name" value="Ig-like_fold"/>
</dbReference>
<dbReference type="InterPro" id="IPR014756">
    <property type="entry name" value="Ig_E-set"/>
</dbReference>
<dbReference type="InterPro" id="IPR023704">
    <property type="entry name" value="MdoG_OpgG"/>
</dbReference>
<dbReference type="PANTHER" id="PTHR30504">
    <property type="entry name" value="GLUCANS BIOSYNTHESIS PROTEIN"/>
    <property type="match status" value="1"/>
</dbReference>
<dbReference type="PANTHER" id="PTHR30504:SF4">
    <property type="entry name" value="GLUCANS BIOSYNTHESIS PROTEIN G"/>
    <property type="match status" value="1"/>
</dbReference>
<dbReference type="Pfam" id="PF04349">
    <property type="entry name" value="MdoG"/>
    <property type="match status" value="1"/>
</dbReference>
<dbReference type="PIRSF" id="PIRSF006281">
    <property type="entry name" value="MdoG"/>
    <property type="match status" value="1"/>
</dbReference>
<dbReference type="SUPFAM" id="SSF81296">
    <property type="entry name" value="E set domains"/>
    <property type="match status" value="1"/>
</dbReference>
<dbReference type="SUPFAM" id="SSF74650">
    <property type="entry name" value="Galactose mutarotase-like"/>
    <property type="match status" value="1"/>
</dbReference>
<proteinExistence type="inferred from homology"/>
<sequence length="511" mass="57882">MMKMRWLSAAVMLTLYTSSSWAFSIDDVAKQAQSLAGKGYEAPKSNLPSVFRDMKYADYQQIQFNHDKAYWNNLKTPFKLEFYHQGMYFDTPVKINEVTATAVKRIKYSPDYFTFGDVQHDKDTVKDLGFAGFKVLYPINSKDKNDEIVSMLGASYFRVIGAGQVYGLSARGLAIDTALPSGEEFPRFKEFWIERPKPTDKRLTIYALLDSPRATGAYKFVVMPGRDTVVDVQSKIYLRDKVGKLGVAPLTSMFLFGPNQPSPANNYRPELHDSNGLSIHAGNGEWIWRPLNNPKHLAVSSFSMENPQGFGLLQRGRDFSRFEDLDDRYDLRPSAWVTPKGEWGKGSVELVEIPTNDETNDNIVAYWTPDQLPEPGKEMNFKYTITFSRDEDKLHAPDNAWVQQTRRSTGDVKQSNLIRQPDGTIAFVVDFTGAEMKKLPEDTPVTAQTSIGDNGEIVESTVRYNPVTKGWRLVMRVKVKDAKKTTEMRAALVNADQTLSETWSYQLPANE</sequence>
<keyword id="KW-0574">Periplasm</keyword>
<keyword id="KW-1185">Reference proteome</keyword>
<keyword id="KW-0732">Signal</keyword>
<reference key="1">
    <citation type="journal article" date="2005" name="Nucleic Acids Res.">
        <title>Genome dynamics and diversity of Shigella species, the etiologic agents of bacillary dysentery.</title>
        <authorList>
            <person name="Yang F."/>
            <person name="Yang J."/>
            <person name="Zhang X."/>
            <person name="Chen L."/>
            <person name="Jiang Y."/>
            <person name="Yan Y."/>
            <person name="Tang X."/>
            <person name="Wang J."/>
            <person name="Xiong Z."/>
            <person name="Dong J."/>
            <person name="Xue Y."/>
            <person name="Zhu Y."/>
            <person name="Xu X."/>
            <person name="Sun L."/>
            <person name="Chen S."/>
            <person name="Nie H."/>
            <person name="Peng J."/>
            <person name="Xu J."/>
            <person name="Wang Y."/>
            <person name="Yuan Z."/>
            <person name="Wen Y."/>
            <person name="Yao Z."/>
            <person name="Shen Y."/>
            <person name="Qiang B."/>
            <person name="Hou Y."/>
            <person name="Yu J."/>
            <person name="Jin Q."/>
        </authorList>
    </citation>
    <scope>NUCLEOTIDE SEQUENCE [LARGE SCALE GENOMIC DNA]</scope>
    <source>
        <strain>Ss046</strain>
    </source>
</reference>